<organism>
    <name type="scientific">Yersinia pestis bv. Antiqua (strain Nepal516)</name>
    <dbReference type="NCBI Taxonomy" id="377628"/>
    <lineage>
        <taxon>Bacteria</taxon>
        <taxon>Pseudomonadati</taxon>
        <taxon>Pseudomonadota</taxon>
        <taxon>Gammaproteobacteria</taxon>
        <taxon>Enterobacterales</taxon>
        <taxon>Yersiniaceae</taxon>
        <taxon>Yersinia</taxon>
    </lineage>
</organism>
<keyword id="KW-0143">Chaperone</keyword>
<keyword id="KW-0963">Cytoplasm</keyword>
<keyword id="KW-0996">Nickel insertion</keyword>
<dbReference type="EMBL" id="CP000305">
    <property type="protein sequence ID" value="ABG17485.1"/>
    <property type="molecule type" value="Genomic_DNA"/>
</dbReference>
<dbReference type="EMBL" id="ACNQ01000008">
    <property type="protein sequence ID" value="EEO77588.1"/>
    <property type="molecule type" value="Genomic_DNA"/>
</dbReference>
<dbReference type="RefSeq" id="WP_002228375.1">
    <property type="nucleotide sequence ID" value="NZ_ACNQ01000008.1"/>
</dbReference>
<dbReference type="SMR" id="Q1CKJ5"/>
<dbReference type="KEGG" id="ypn:YPN_1155"/>
<dbReference type="HOGENOM" id="CLU_056339_1_0_6"/>
<dbReference type="Proteomes" id="UP000008936">
    <property type="component" value="Chromosome"/>
</dbReference>
<dbReference type="GO" id="GO:0005737">
    <property type="term" value="C:cytoplasm"/>
    <property type="evidence" value="ECO:0007669"/>
    <property type="project" value="UniProtKB-SubCell"/>
</dbReference>
<dbReference type="GO" id="GO:0016151">
    <property type="term" value="F:nickel cation binding"/>
    <property type="evidence" value="ECO:0007669"/>
    <property type="project" value="UniProtKB-UniRule"/>
</dbReference>
<dbReference type="HAMAP" id="MF_01384">
    <property type="entry name" value="UreD"/>
    <property type="match status" value="1"/>
</dbReference>
<dbReference type="InterPro" id="IPR002669">
    <property type="entry name" value="UreD"/>
</dbReference>
<dbReference type="PANTHER" id="PTHR33643">
    <property type="entry name" value="UREASE ACCESSORY PROTEIN D"/>
    <property type="match status" value="1"/>
</dbReference>
<dbReference type="PANTHER" id="PTHR33643:SF1">
    <property type="entry name" value="UREASE ACCESSORY PROTEIN D"/>
    <property type="match status" value="1"/>
</dbReference>
<dbReference type="Pfam" id="PF01774">
    <property type="entry name" value="UreD"/>
    <property type="match status" value="1"/>
</dbReference>
<sequence length="277" mass="30816">MTAQSQNIVETPSRVRAHALGVNAPELAKYQDEPAQMRSGAVGKSGYLKLRFAKREHCSILAEMERRVPSLVQKALYWDEEIPELPCVTMISTSGCILQGDRLATDVHVEAGACAHVTTQSATKVHMMNANYASQIQNFIVEEGGYLEFMPDPLIPHRNSRFITDTTISIHPTATAIYSEVLMSGRKYHHADERFGFDVYSSRVAAQNLAGKELFVEKYVLEPKVESLDAVGVMQTFDAFGNVILLTPKEHHDRILARVPAHFDIKGGDCQRRDAST</sequence>
<feature type="chain" id="PRO_1000145104" description="Urease accessory protein UreD">
    <location>
        <begin position="1"/>
        <end position="277"/>
    </location>
</feature>
<reference key="1">
    <citation type="journal article" date="2006" name="J. Bacteriol.">
        <title>Complete genome sequence of Yersinia pestis strains Antiqua and Nepal516: evidence of gene reduction in an emerging pathogen.</title>
        <authorList>
            <person name="Chain P.S.G."/>
            <person name="Hu P."/>
            <person name="Malfatti S.A."/>
            <person name="Radnedge L."/>
            <person name="Larimer F."/>
            <person name="Vergez L.M."/>
            <person name="Worsham P."/>
            <person name="Chu M.C."/>
            <person name="Andersen G.L."/>
        </authorList>
    </citation>
    <scope>NUCLEOTIDE SEQUENCE [LARGE SCALE GENOMIC DNA]</scope>
    <source>
        <strain>Nepal516</strain>
    </source>
</reference>
<reference key="2">
    <citation type="submission" date="2009-04" db="EMBL/GenBank/DDBJ databases">
        <title>Yersinia pestis Nepal516A whole genome shotgun sequencing project.</title>
        <authorList>
            <person name="Plunkett G. III"/>
            <person name="Anderson B.D."/>
            <person name="Baumler D.J."/>
            <person name="Burland V."/>
            <person name="Cabot E.L."/>
            <person name="Glasner J.D."/>
            <person name="Mau B."/>
            <person name="Neeno-Eckwall E."/>
            <person name="Perna N.T."/>
            <person name="Munk A.C."/>
            <person name="Tapia R."/>
            <person name="Green L.D."/>
            <person name="Rogers Y.C."/>
            <person name="Detter J.C."/>
            <person name="Bruce D.C."/>
            <person name="Brettin T.S."/>
        </authorList>
    </citation>
    <scope>NUCLEOTIDE SEQUENCE [LARGE SCALE GENOMIC DNA]</scope>
    <source>
        <strain>Nepal516</strain>
    </source>
</reference>
<name>URED_YERPN</name>
<accession>Q1CKJ5</accession>
<accession>C4GR97</accession>
<proteinExistence type="inferred from homology"/>
<evidence type="ECO:0000255" key="1">
    <source>
        <dbReference type="HAMAP-Rule" id="MF_01384"/>
    </source>
</evidence>
<protein>
    <recommendedName>
        <fullName evidence="1">Urease accessory protein UreD</fullName>
    </recommendedName>
</protein>
<gene>
    <name evidence="1" type="primary">ureD</name>
    <name type="ordered locus">YPN_1155</name>
    <name type="ORF">YP516_1265</name>
</gene>
<comment type="function">
    <text evidence="1">Required for maturation of urease via the functional incorporation of the urease nickel metallocenter.</text>
</comment>
<comment type="subunit">
    <text evidence="1">UreD, UreF and UreG form a complex that acts as a GTP-hydrolysis-dependent molecular chaperone, activating the urease apoprotein by helping to assemble the nickel containing metallocenter of UreC. The UreE protein probably delivers the nickel.</text>
</comment>
<comment type="subcellular location">
    <subcellularLocation>
        <location evidence="1">Cytoplasm</location>
    </subcellularLocation>
</comment>
<comment type="similarity">
    <text evidence="1">Belongs to the UreD family.</text>
</comment>